<name>RECO_CHLMU</name>
<dbReference type="EMBL" id="AE002160">
    <property type="protein sequence ID" value="AAF39559.1"/>
    <property type="molecule type" value="Genomic_DNA"/>
</dbReference>
<dbReference type="PIR" id="H81669">
    <property type="entry name" value="H81669"/>
</dbReference>
<dbReference type="RefSeq" id="WP_010231455.1">
    <property type="nucleotide sequence ID" value="NZ_CP063055.1"/>
</dbReference>
<dbReference type="SMR" id="Q9PJS3"/>
<dbReference type="GeneID" id="1246119"/>
<dbReference type="KEGG" id="cmu:TC_0755"/>
<dbReference type="eggNOG" id="COG1381">
    <property type="taxonomic scope" value="Bacteria"/>
</dbReference>
<dbReference type="HOGENOM" id="CLU_1122990_0_0_0"/>
<dbReference type="OrthoDB" id="17601at2"/>
<dbReference type="Proteomes" id="UP000000800">
    <property type="component" value="Chromosome"/>
</dbReference>
<dbReference type="GO" id="GO:0043590">
    <property type="term" value="C:bacterial nucleoid"/>
    <property type="evidence" value="ECO:0007669"/>
    <property type="project" value="TreeGrafter"/>
</dbReference>
<dbReference type="GO" id="GO:0006310">
    <property type="term" value="P:DNA recombination"/>
    <property type="evidence" value="ECO:0007669"/>
    <property type="project" value="UniProtKB-UniRule"/>
</dbReference>
<dbReference type="GO" id="GO:0006302">
    <property type="term" value="P:double-strand break repair"/>
    <property type="evidence" value="ECO:0007669"/>
    <property type="project" value="TreeGrafter"/>
</dbReference>
<dbReference type="Gene3D" id="1.20.1440.120">
    <property type="entry name" value="Recombination protein O, C-terminal domain"/>
    <property type="match status" value="1"/>
</dbReference>
<dbReference type="HAMAP" id="MF_00201">
    <property type="entry name" value="RecO"/>
    <property type="match status" value="1"/>
</dbReference>
<dbReference type="InterPro" id="IPR037278">
    <property type="entry name" value="ARFGAP/RecO"/>
</dbReference>
<dbReference type="InterPro" id="IPR012340">
    <property type="entry name" value="NA-bd_OB-fold"/>
</dbReference>
<dbReference type="InterPro" id="IPR003717">
    <property type="entry name" value="RecO"/>
</dbReference>
<dbReference type="InterPro" id="IPR042242">
    <property type="entry name" value="RecO_C"/>
</dbReference>
<dbReference type="NCBIfam" id="TIGR00613">
    <property type="entry name" value="reco"/>
    <property type="match status" value="1"/>
</dbReference>
<dbReference type="PANTHER" id="PTHR33991">
    <property type="entry name" value="DNA REPAIR PROTEIN RECO"/>
    <property type="match status" value="1"/>
</dbReference>
<dbReference type="PANTHER" id="PTHR33991:SF1">
    <property type="entry name" value="DNA REPAIR PROTEIN RECO"/>
    <property type="match status" value="1"/>
</dbReference>
<dbReference type="Pfam" id="PF02565">
    <property type="entry name" value="RecO_C"/>
    <property type="match status" value="1"/>
</dbReference>
<dbReference type="SUPFAM" id="SSF57863">
    <property type="entry name" value="ArfGap/RecO-like zinc finger"/>
    <property type="match status" value="1"/>
</dbReference>
<dbReference type="SUPFAM" id="SSF50249">
    <property type="entry name" value="Nucleic acid-binding proteins"/>
    <property type="match status" value="1"/>
</dbReference>
<keyword id="KW-0227">DNA damage</keyword>
<keyword id="KW-0233">DNA recombination</keyword>
<keyword id="KW-0234">DNA repair</keyword>
<organism>
    <name type="scientific">Chlamydia muridarum (strain MoPn / Nigg)</name>
    <dbReference type="NCBI Taxonomy" id="243161"/>
    <lineage>
        <taxon>Bacteria</taxon>
        <taxon>Pseudomonadati</taxon>
        <taxon>Chlamydiota</taxon>
        <taxon>Chlamydiia</taxon>
        <taxon>Chlamydiales</taxon>
        <taxon>Chlamydiaceae</taxon>
        <taxon>Chlamydia/Chlamydophila group</taxon>
        <taxon>Chlamydia</taxon>
    </lineage>
</organism>
<sequence length="234" mass="26658">MQIILPGIVLTHSPAEKQHVIAKIFSPAGLLSAFAKNGASLSCDFRESLLPISFSLFTIQHTPPKMRKVLQGELKNPFTTIKNSYRLLQSTGKMIQAILKTQWQEKPSPQLFSLFLNFLQRIPETPHPYFFSSMFLLKLLQHEGSLDLSHSCTLCKSSLESSTVYRHEGSLFCEKHAHEKTILFSQEEEQILRIIVQAKKFQELMCLAEFPIDIDSKIDSLFSSFLTEKMNVLP</sequence>
<feature type="chain" id="PRO_0000204942" description="DNA repair protein RecO">
    <location>
        <begin position="1"/>
        <end position="234"/>
    </location>
</feature>
<protein>
    <recommendedName>
        <fullName>DNA repair protein RecO</fullName>
    </recommendedName>
    <alternativeName>
        <fullName>Recombination protein O</fullName>
    </alternativeName>
</protein>
<gene>
    <name type="primary">recO</name>
    <name type="ordered locus">TC_0755</name>
</gene>
<proteinExistence type="inferred from homology"/>
<evidence type="ECO:0000250" key="1"/>
<evidence type="ECO:0000305" key="2"/>
<reference key="1">
    <citation type="journal article" date="2000" name="Nucleic Acids Res.">
        <title>Genome sequences of Chlamydia trachomatis MoPn and Chlamydia pneumoniae AR39.</title>
        <authorList>
            <person name="Read T.D."/>
            <person name="Brunham R.C."/>
            <person name="Shen C."/>
            <person name="Gill S.R."/>
            <person name="Heidelberg J.F."/>
            <person name="White O."/>
            <person name="Hickey E.K."/>
            <person name="Peterson J.D."/>
            <person name="Utterback T.R."/>
            <person name="Berry K.J."/>
            <person name="Bass S."/>
            <person name="Linher K.D."/>
            <person name="Weidman J.F."/>
            <person name="Khouri H.M."/>
            <person name="Craven B."/>
            <person name="Bowman C."/>
            <person name="Dodson R.J."/>
            <person name="Gwinn M.L."/>
            <person name="Nelson W.C."/>
            <person name="DeBoy R.T."/>
            <person name="Kolonay J.F."/>
            <person name="McClarty G."/>
            <person name="Salzberg S.L."/>
            <person name="Eisen J.A."/>
            <person name="Fraser C.M."/>
        </authorList>
    </citation>
    <scope>NUCLEOTIDE SEQUENCE [LARGE SCALE GENOMIC DNA]</scope>
    <source>
        <strain>MoPn / Nigg</strain>
    </source>
</reference>
<comment type="function">
    <text evidence="1">Involved in DNA repair and RecF pathway recombination.</text>
</comment>
<comment type="similarity">
    <text evidence="2">Belongs to the RecO family.</text>
</comment>
<accession>Q9PJS3</accession>